<dbReference type="EMBL" id="CP000922">
    <property type="protein sequence ID" value="ACJ32412.1"/>
    <property type="molecule type" value="Genomic_DNA"/>
</dbReference>
<dbReference type="RefSeq" id="WP_004888509.1">
    <property type="nucleotide sequence ID" value="NC_011567.1"/>
</dbReference>
<dbReference type="SMR" id="B7GFG2"/>
<dbReference type="STRING" id="491915.Aflv_0028"/>
<dbReference type="GeneID" id="7036222"/>
<dbReference type="KEGG" id="afl:Aflv_0028"/>
<dbReference type="eggNOG" id="COG4467">
    <property type="taxonomic scope" value="Bacteria"/>
</dbReference>
<dbReference type="HOGENOM" id="CLU_157169_0_0_9"/>
<dbReference type="Proteomes" id="UP000000742">
    <property type="component" value="Chromosome"/>
</dbReference>
<dbReference type="GO" id="GO:0009295">
    <property type="term" value="C:nucleoid"/>
    <property type="evidence" value="ECO:0007669"/>
    <property type="project" value="UniProtKB-SubCell"/>
</dbReference>
<dbReference type="GO" id="GO:0006260">
    <property type="term" value="P:DNA replication"/>
    <property type="evidence" value="ECO:0007669"/>
    <property type="project" value="UniProtKB-UniRule"/>
</dbReference>
<dbReference type="HAMAP" id="MF_01159">
    <property type="entry name" value="YabA"/>
    <property type="match status" value="1"/>
</dbReference>
<dbReference type="InterPro" id="IPR010377">
    <property type="entry name" value="YabA"/>
</dbReference>
<dbReference type="NCBIfam" id="NF009644">
    <property type="entry name" value="PRK13169.1-5"/>
    <property type="match status" value="1"/>
</dbReference>
<dbReference type="Pfam" id="PF06156">
    <property type="entry name" value="YabA"/>
    <property type="match status" value="1"/>
</dbReference>
<dbReference type="PIRSF" id="PIRSF021439">
    <property type="entry name" value="DUF972"/>
    <property type="match status" value="1"/>
</dbReference>
<reference key="1">
    <citation type="journal article" date="2008" name="Genome Biol.">
        <title>Encapsulated in silica: genome, proteome and physiology of the thermophilic bacterium Anoxybacillus flavithermus WK1.</title>
        <authorList>
            <person name="Saw J.H."/>
            <person name="Mountain B.W."/>
            <person name="Feng L."/>
            <person name="Omelchenko M.V."/>
            <person name="Hou S."/>
            <person name="Saito J.A."/>
            <person name="Stott M.B."/>
            <person name="Li D."/>
            <person name="Zhao G."/>
            <person name="Wu J."/>
            <person name="Galperin M.Y."/>
            <person name="Koonin E.V."/>
            <person name="Makarova K.S."/>
            <person name="Wolf Y.I."/>
            <person name="Rigden D.J."/>
            <person name="Dunfield P.F."/>
            <person name="Wang L."/>
            <person name="Alam M."/>
        </authorList>
    </citation>
    <scope>NUCLEOTIDE SEQUENCE [LARGE SCALE GENOMIC DNA]</scope>
    <source>
        <strain>DSM 21510 / WK1</strain>
    </source>
</reference>
<name>YABA_ANOFW</name>
<feature type="chain" id="PRO_1000137828" description="Replication initiation control protein YabA">
    <location>
        <begin position="1"/>
        <end position="115"/>
    </location>
</feature>
<feature type="binding site" evidence="1">
    <location>
        <position position="90"/>
    </location>
    <ligand>
        <name>Zn(2+)</name>
        <dbReference type="ChEBI" id="CHEBI:29105"/>
    </ligand>
</feature>
<feature type="binding site" evidence="1">
    <location>
        <position position="92"/>
    </location>
    <ligand>
        <name>Zn(2+)</name>
        <dbReference type="ChEBI" id="CHEBI:29105"/>
    </ligand>
</feature>
<feature type="binding site" evidence="1">
    <location>
        <position position="105"/>
    </location>
    <ligand>
        <name>Zn(2+)</name>
        <dbReference type="ChEBI" id="CHEBI:29105"/>
    </ligand>
</feature>
<feature type="binding site" evidence="1">
    <location>
        <position position="108"/>
    </location>
    <ligand>
        <name>Zn(2+)</name>
        <dbReference type="ChEBI" id="CHEBI:29105"/>
    </ligand>
</feature>
<comment type="function">
    <text evidence="1">Involved in control of chromosome replication initiation. Inhibits the cooperative binding of DnaA to the oriC region, thus negatively regulating initiation of chromosome replication. Inhibits the ability of DnaA-ATP to form a helix on DNA; does not disassemble preformed DnaA-DNA helices. Decreases the residence time of DnaA on the chromosome at its binding sites (oriC, replication forks and promoter-binding sites). Tethers DnaA to the replication machinery via the DNA polymerase beta sliding clamp subunit (dnaN). Associates with oriC and other DnaA targets on the chromosome in a DnaA-dependent manner.</text>
</comment>
<comment type="cofactor">
    <cofactor evidence="1">
        <name>Zn(2+)</name>
        <dbReference type="ChEBI" id="CHEBI:29105"/>
    </cofactor>
    <text evidence="1">Binds 1 zinc ion per subunit.</text>
</comment>
<comment type="subunit">
    <text evidence="1">Homotetramer. Interacts with both DnaA and DnaN, acting as a bridge between these two proteins.</text>
</comment>
<comment type="subcellular location">
    <subcellularLocation>
        <location evidence="1">Cytoplasm</location>
        <location evidence="1">Nucleoid</location>
    </subcellularLocation>
    <text evidence="1">Localizes in tight foci, which correspond to the replisome at mid-cell throughout the cell cycle.</text>
</comment>
<comment type="similarity">
    <text evidence="1">Belongs to the YabA family.</text>
</comment>
<accession>B7GFG2</accession>
<gene>
    <name evidence="1" type="primary">yabA</name>
    <name type="ordered locus">Aflv_0028</name>
</gene>
<proteinExistence type="inferred from homology"/>
<protein>
    <recommendedName>
        <fullName evidence="1">Replication initiation control protein YabA</fullName>
    </recommendedName>
</protein>
<evidence type="ECO:0000255" key="1">
    <source>
        <dbReference type="HAMAP-Rule" id="MF_01159"/>
    </source>
</evidence>
<sequence>MNKKEIFQSVTSIEEQIAHLYKQLGELKSYLGELIEENHRLQVENDHLRRRLEQLSERKVEQGKKQTKAKLVDIGEGYDNLARLYQEGFHICNVHYGSLRTDGDCLFCLSFLNKK</sequence>
<organism>
    <name type="scientific">Anoxybacillus flavithermus (strain DSM 21510 / WK1)</name>
    <dbReference type="NCBI Taxonomy" id="491915"/>
    <lineage>
        <taxon>Bacteria</taxon>
        <taxon>Bacillati</taxon>
        <taxon>Bacillota</taxon>
        <taxon>Bacilli</taxon>
        <taxon>Bacillales</taxon>
        <taxon>Anoxybacillaceae</taxon>
        <taxon>Anoxybacillus</taxon>
    </lineage>
</organism>
<keyword id="KW-0963">Cytoplasm</keyword>
<keyword id="KW-0235">DNA replication</keyword>
<keyword id="KW-0236">DNA replication inhibitor</keyword>
<keyword id="KW-0479">Metal-binding</keyword>
<keyword id="KW-0862">Zinc</keyword>